<proteinExistence type="inferred from homology"/>
<protein>
    <recommendedName>
        <fullName>Clathrin-associated protein AP-3 complex component APS3</fullName>
    </recommendedName>
</protein>
<keyword id="KW-0968">Cytoplasmic vesicle</keyword>
<keyword id="KW-0333">Golgi apparatus</keyword>
<keyword id="KW-0472">Membrane</keyword>
<keyword id="KW-0653">Protein transport</keyword>
<keyword id="KW-1185">Reference proteome</keyword>
<keyword id="KW-0813">Transport</keyword>
<keyword id="KW-0843">Virulence</keyword>
<gene>
    <name type="primary">APS3</name>
    <name type="ordered locus">CAALFM_C108480CA</name>
    <name type="ORF">CaO19.393</name>
    <name type="ORF">CaO19.8023</name>
</gene>
<evidence type="ECO:0000250" key="1"/>
<evidence type="ECO:0000269" key="2">
    <source>
    </source>
</evidence>
<evidence type="ECO:0000305" key="3"/>
<feature type="chain" id="PRO_0000422796" description="Clathrin-associated protein AP-3 complex component APS3">
    <location>
        <begin position="1"/>
        <end position="175"/>
    </location>
</feature>
<comment type="function">
    <text evidence="1 2">Part of the AP-3 complex, an adapter-related complex which is not clathrin-associated. The complex is associated with the Golgi region as well as more peripheral structures. It facilitates the budding of vesicles from the Golgi membrane (By similarity). Involved in vacuolar trafficking and contributes to hyphal growth and pathogenesis.</text>
</comment>
<comment type="subunit">
    <text evidence="1">Adaptor protein complex 3 (AP-3) is a heterotetramer composed of 2 large adaptins, a medium adaptin and a small adaptin.</text>
</comment>
<comment type="subcellular location">
    <subcellularLocation>
        <location evidence="1">Golgi apparatus</location>
    </subcellularLocation>
    <subcellularLocation>
        <location evidence="1">Cytoplasmic vesicle membrane</location>
        <topology evidence="1">Peripheral membrane protein</topology>
        <orientation evidence="1">Cytoplasmic side</orientation>
    </subcellularLocation>
    <text evidence="1">Component of the coat surrounding the cytoplasmic face of coated vesicles located at the Golgi complex.</text>
</comment>
<comment type="similarity">
    <text evidence="3">Belongs to the adaptor complexes small subunit family.</text>
</comment>
<reference key="1">
    <citation type="journal article" date="2004" name="Proc. Natl. Acad. Sci. U.S.A.">
        <title>The diploid genome sequence of Candida albicans.</title>
        <authorList>
            <person name="Jones T."/>
            <person name="Federspiel N.A."/>
            <person name="Chibana H."/>
            <person name="Dungan J."/>
            <person name="Kalman S."/>
            <person name="Magee B.B."/>
            <person name="Newport G."/>
            <person name="Thorstenson Y.R."/>
            <person name="Agabian N."/>
            <person name="Magee P.T."/>
            <person name="Davis R.W."/>
            <person name="Scherer S."/>
        </authorList>
    </citation>
    <scope>NUCLEOTIDE SEQUENCE [LARGE SCALE GENOMIC DNA]</scope>
    <source>
        <strain>SC5314 / ATCC MYA-2876</strain>
    </source>
</reference>
<reference key="2">
    <citation type="journal article" date="2007" name="Genome Biol.">
        <title>Assembly of the Candida albicans genome into sixteen supercontigs aligned on the eight chromosomes.</title>
        <authorList>
            <person name="van het Hoog M."/>
            <person name="Rast T.J."/>
            <person name="Martchenko M."/>
            <person name="Grindle S."/>
            <person name="Dignard D."/>
            <person name="Hogues H."/>
            <person name="Cuomo C."/>
            <person name="Berriman M."/>
            <person name="Scherer S."/>
            <person name="Magee B.B."/>
            <person name="Whiteway M."/>
            <person name="Chibana H."/>
            <person name="Nantel A."/>
            <person name="Magee P.T."/>
        </authorList>
    </citation>
    <scope>GENOME REANNOTATION</scope>
    <source>
        <strain>SC5314 / ATCC MYA-2876</strain>
    </source>
</reference>
<reference key="3">
    <citation type="journal article" date="2013" name="Genome Biol.">
        <title>Assembly of a phased diploid Candida albicans genome facilitates allele-specific measurements and provides a simple model for repeat and indel structure.</title>
        <authorList>
            <person name="Muzzey D."/>
            <person name="Schwartz K."/>
            <person name="Weissman J.S."/>
            <person name="Sherlock G."/>
        </authorList>
    </citation>
    <scope>NUCLEOTIDE SEQUENCE [LARGE SCALE GENOMIC DNA]</scope>
    <scope>GENOME REANNOTATION</scope>
    <source>
        <strain>SC5314 / ATCC MYA-2876</strain>
    </source>
</reference>
<reference key="4">
    <citation type="journal article" date="2010" name="Eukaryot. Cell">
        <title>Endosomal and AP-3-dependent vacuolar trafficking routes make additive contributions to Candida albicans hyphal growth and pathogenesis.</title>
        <authorList>
            <person name="Palmer G.E."/>
        </authorList>
    </citation>
    <scope>FUNCTION</scope>
</reference>
<sequence length="175" mass="19760">MIHSVLIFNNDGLPRLMKFYTKVDIPTQKLLLQQVHSLISTRSAQECSFITPPSLLEDLDDIKVIYRHYATLYFVFIVDDQESELGILDLIQVFVECLDKCFSNVCELDLVFGWQVLQTVLEEIVQGGMVIDTNINRIVAAVDEANSQKNVNSNGSTISASILSSLSRDRGFWGR</sequence>
<dbReference type="EMBL" id="CP017623">
    <property type="protein sequence ID" value="AOW26486.1"/>
    <property type="molecule type" value="Genomic_DNA"/>
</dbReference>
<dbReference type="RefSeq" id="XP_019330678.1">
    <property type="nucleotide sequence ID" value="XM_019475133.1"/>
</dbReference>
<dbReference type="SMR" id="Q59QC5"/>
<dbReference type="FunCoup" id="Q59QC5">
    <property type="interactions" value="430"/>
</dbReference>
<dbReference type="STRING" id="237561.Q59QC5"/>
<dbReference type="EnsemblFungi" id="C1_08480C_A-T">
    <property type="protein sequence ID" value="C1_08480C_A-T-p1"/>
    <property type="gene ID" value="C1_08480C_A"/>
</dbReference>
<dbReference type="GeneID" id="3646491"/>
<dbReference type="KEGG" id="cal:CAALFM_C108480CA"/>
<dbReference type="CGD" id="CAL0000182525">
    <property type="gene designation" value="APS3"/>
</dbReference>
<dbReference type="VEuPathDB" id="FungiDB:C1_08480C_A"/>
<dbReference type="eggNOG" id="KOG0936">
    <property type="taxonomic scope" value="Eukaryota"/>
</dbReference>
<dbReference type="HOGENOM" id="CLU_061221_2_0_1"/>
<dbReference type="InParanoid" id="Q59QC5"/>
<dbReference type="OMA" id="DLIFNWQ"/>
<dbReference type="OrthoDB" id="10261046at2759"/>
<dbReference type="PRO" id="PR:Q59QC5"/>
<dbReference type="Proteomes" id="UP000000559">
    <property type="component" value="Chromosome 1"/>
</dbReference>
<dbReference type="GO" id="GO:0030123">
    <property type="term" value="C:AP-3 adaptor complex"/>
    <property type="evidence" value="ECO:0007669"/>
    <property type="project" value="EnsemblFungi"/>
</dbReference>
<dbReference type="GO" id="GO:0030659">
    <property type="term" value="C:cytoplasmic vesicle membrane"/>
    <property type="evidence" value="ECO:0007669"/>
    <property type="project" value="UniProtKB-SubCell"/>
</dbReference>
<dbReference type="GO" id="GO:0005794">
    <property type="term" value="C:Golgi apparatus"/>
    <property type="evidence" value="ECO:0007669"/>
    <property type="project" value="UniProtKB-SubCell"/>
</dbReference>
<dbReference type="GO" id="GO:0043231">
    <property type="term" value="C:intracellular membrane-bounded organelle"/>
    <property type="evidence" value="ECO:0000318"/>
    <property type="project" value="GO_Central"/>
</dbReference>
<dbReference type="GO" id="GO:0006896">
    <property type="term" value="P:Golgi to vacuole transport"/>
    <property type="evidence" value="ECO:0000315"/>
    <property type="project" value="CGD"/>
</dbReference>
<dbReference type="GO" id="GO:0006623">
    <property type="term" value="P:protein targeting to vacuole"/>
    <property type="evidence" value="ECO:0007669"/>
    <property type="project" value="EnsemblFungi"/>
</dbReference>
<dbReference type="GO" id="GO:0016192">
    <property type="term" value="P:vesicle-mediated transport"/>
    <property type="evidence" value="ECO:0000318"/>
    <property type="project" value="GO_Central"/>
</dbReference>
<dbReference type="FunFam" id="3.30.450.60:FF:000001">
    <property type="entry name" value="AP complex subunit sigma"/>
    <property type="match status" value="1"/>
</dbReference>
<dbReference type="Gene3D" id="3.30.450.60">
    <property type="match status" value="1"/>
</dbReference>
<dbReference type="InterPro" id="IPR016635">
    <property type="entry name" value="AP_complex_ssu"/>
</dbReference>
<dbReference type="InterPro" id="IPR022775">
    <property type="entry name" value="AP_mu_sigma_su"/>
</dbReference>
<dbReference type="InterPro" id="IPR000804">
    <property type="entry name" value="Clathrin_sm-chain_CS"/>
</dbReference>
<dbReference type="InterPro" id="IPR011012">
    <property type="entry name" value="Longin-like_dom_sf"/>
</dbReference>
<dbReference type="PANTHER" id="PTHR11753">
    <property type="entry name" value="ADAPTOR COMPLEXES SMALL SUBUNIT FAMILY"/>
    <property type="match status" value="1"/>
</dbReference>
<dbReference type="Pfam" id="PF01217">
    <property type="entry name" value="Clat_adaptor_s"/>
    <property type="match status" value="1"/>
</dbReference>
<dbReference type="PIRSF" id="PIRSF015588">
    <property type="entry name" value="AP_complex_sigma"/>
    <property type="match status" value="1"/>
</dbReference>
<dbReference type="SUPFAM" id="SSF64356">
    <property type="entry name" value="SNARE-like"/>
    <property type="match status" value="1"/>
</dbReference>
<dbReference type="PROSITE" id="PS00989">
    <property type="entry name" value="CLAT_ADAPTOR_S"/>
    <property type="match status" value="1"/>
</dbReference>
<accession>Q59QC5</accession>
<accession>A0A1D8PEE5</accession>
<name>APS3_CANAL</name>
<organism>
    <name type="scientific">Candida albicans (strain SC5314 / ATCC MYA-2876)</name>
    <name type="common">Yeast</name>
    <dbReference type="NCBI Taxonomy" id="237561"/>
    <lineage>
        <taxon>Eukaryota</taxon>
        <taxon>Fungi</taxon>
        <taxon>Dikarya</taxon>
        <taxon>Ascomycota</taxon>
        <taxon>Saccharomycotina</taxon>
        <taxon>Pichiomycetes</taxon>
        <taxon>Debaryomycetaceae</taxon>
        <taxon>Candida/Lodderomyces clade</taxon>
        <taxon>Candida</taxon>
    </lineage>
</organism>